<evidence type="ECO:0000250" key="1"/>
<evidence type="ECO:0000269" key="2">
    <source ref="1"/>
</evidence>
<reference key="1">
    <citation type="submission" date="2002-04" db="PIR data bank">
        <authorList>
            <person name="Nagle G.T."/>
        </authorList>
    </citation>
    <scope>PROTEIN SEQUENCE</scope>
    <scope>DISULFIDE BONDS</scope>
    <source>
        <tissue>Albumen gland</tissue>
    </source>
</reference>
<comment type="function">
    <text evidence="1">Water-borne pheromone that attract the marine mollusk Aplysia into breeding aggregations and coordinate male and female reproductive behavior within the aggregation.</text>
</comment>
<comment type="subcellular location">
    <subcellularLocation>
        <location evidence="1">Secreted</location>
    </subcellularLocation>
</comment>
<comment type="tissue specificity">
    <text>Produced by the albumen gland of the egg cordons.</text>
</comment>
<dbReference type="PIR" id="A59424">
    <property type="entry name" value="A59424"/>
</dbReference>
<dbReference type="SMR" id="Q7M461"/>
<dbReference type="GO" id="GO:0005576">
    <property type="term" value="C:extracellular region"/>
    <property type="evidence" value="ECO:0007669"/>
    <property type="project" value="UniProtKB-SubCell"/>
</dbReference>
<dbReference type="GO" id="GO:0000772">
    <property type="term" value="F:mating pheromone activity"/>
    <property type="evidence" value="ECO:0007669"/>
    <property type="project" value="InterPro"/>
</dbReference>
<dbReference type="GO" id="GO:0019953">
    <property type="term" value="P:sexual reproduction"/>
    <property type="evidence" value="ECO:0007669"/>
    <property type="project" value="InterPro"/>
</dbReference>
<dbReference type="Gene3D" id="1.20.1400.10">
    <property type="entry name" value="Attractin"/>
    <property type="match status" value="1"/>
</dbReference>
<dbReference type="InterPro" id="IPR012529">
    <property type="entry name" value="Attractin"/>
</dbReference>
<dbReference type="InterPro" id="IPR036585">
    <property type="entry name" value="Attractin_sf"/>
</dbReference>
<dbReference type="Pfam" id="PF08037">
    <property type="entry name" value="Attractin"/>
    <property type="match status" value="1"/>
</dbReference>
<dbReference type="SUPFAM" id="SSF90183">
    <property type="entry name" value="Mollusk pheromone"/>
    <property type="match status" value="1"/>
</dbReference>
<organism>
    <name type="scientific">Aplysia vaccaria</name>
    <name type="common">California black sea hare</name>
    <dbReference type="NCBI Taxonomy" id="144771"/>
    <lineage>
        <taxon>Eukaryota</taxon>
        <taxon>Metazoa</taxon>
        <taxon>Spiralia</taxon>
        <taxon>Lophotrochozoa</taxon>
        <taxon>Mollusca</taxon>
        <taxon>Gastropoda</taxon>
        <taxon>Heterobranchia</taxon>
        <taxon>Euthyneura</taxon>
        <taxon>Tectipleura</taxon>
        <taxon>Aplysiida</taxon>
        <taxon>Aplysioidea</taxon>
        <taxon>Aplysiidae</taxon>
        <taxon>Aplysia</taxon>
    </lineage>
</organism>
<protein>
    <recommendedName>
        <fullName>Attractin</fullName>
    </recommendedName>
</protein>
<feature type="chain" id="PRO_0000064746" description="Attractin">
    <location>
        <begin position="1"/>
        <end position="56"/>
    </location>
</feature>
<feature type="disulfide bond" evidence="2">
    <location>
        <begin position="4"/>
        <end position="41"/>
    </location>
</feature>
<feature type="disulfide bond" evidence="2">
    <location>
        <begin position="13"/>
        <end position="33"/>
    </location>
</feature>
<feature type="disulfide bond" evidence="2">
    <location>
        <begin position="20"/>
        <end position="26"/>
    </location>
</feature>
<gene>
    <name type="primary">ATT</name>
</gene>
<proteinExistence type="evidence at protein level"/>
<sequence>NNKCDIEFATSECEMRYQDCGEASSCTALIEECKTSLQEECNQASSDESSTTVRPE</sequence>
<keyword id="KW-0903">Direct protein sequencing</keyword>
<keyword id="KW-1015">Disulfide bond</keyword>
<keyword id="KW-0588">Pheromone</keyword>
<keyword id="KW-0964">Secreted</keyword>
<name>ATT_APLVA</name>
<accession>Q7M461</accession>